<dbReference type="EC" id="1.1.1.23" evidence="1"/>
<dbReference type="EMBL" id="BA000043">
    <property type="protein sequence ID" value="BAD77360.1"/>
    <property type="molecule type" value="Genomic_DNA"/>
</dbReference>
<dbReference type="RefSeq" id="WP_011232545.1">
    <property type="nucleotide sequence ID" value="NC_006510.1"/>
</dbReference>
<dbReference type="SMR" id="Q5KVC6"/>
<dbReference type="STRING" id="235909.GK3075"/>
<dbReference type="KEGG" id="gka:GK3075"/>
<dbReference type="eggNOG" id="COG0141">
    <property type="taxonomic scope" value="Bacteria"/>
</dbReference>
<dbReference type="HOGENOM" id="CLU_006732_3_3_9"/>
<dbReference type="UniPathway" id="UPA00031">
    <property type="reaction ID" value="UER00014"/>
</dbReference>
<dbReference type="Proteomes" id="UP000001172">
    <property type="component" value="Chromosome"/>
</dbReference>
<dbReference type="GO" id="GO:0005829">
    <property type="term" value="C:cytosol"/>
    <property type="evidence" value="ECO:0007669"/>
    <property type="project" value="TreeGrafter"/>
</dbReference>
<dbReference type="GO" id="GO:0004399">
    <property type="term" value="F:histidinol dehydrogenase activity"/>
    <property type="evidence" value="ECO:0007669"/>
    <property type="project" value="UniProtKB-UniRule"/>
</dbReference>
<dbReference type="GO" id="GO:0051287">
    <property type="term" value="F:NAD binding"/>
    <property type="evidence" value="ECO:0007669"/>
    <property type="project" value="InterPro"/>
</dbReference>
<dbReference type="GO" id="GO:0008270">
    <property type="term" value="F:zinc ion binding"/>
    <property type="evidence" value="ECO:0007669"/>
    <property type="project" value="UniProtKB-UniRule"/>
</dbReference>
<dbReference type="GO" id="GO:0000105">
    <property type="term" value="P:L-histidine biosynthetic process"/>
    <property type="evidence" value="ECO:0007669"/>
    <property type="project" value="UniProtKB-UniRule"/>
</dbReference>
<dbReference type="CDD" id="cd06572">
    <property type="entry name" value="Histidinol_dh"/>
    <property type="match status" value="1"/>
</dbReference>
<dbReference type="FunFam" id="3.40.50.1980:FF:000001">
    <property type="entry name" value="Histidinol dehydrogenase"/>
    <property type="match status" value="1"/>
</dbReference>
<dbReference type="FunFam" id="3.40.50.1980:FF:000026">
    <property type="entry name" value="Histidinol dehydrogenase"/>
    <property type="match status" value="1"/>
</dbReference>
<dbReference type="Gene3D" id="1.20.5.1300">
    <property type="match status" value="1"/>
</dbReference>
<dbReference type="Gene3D" id="3.40.50.1980">
    <property type="entry name" value="Nitrogenase molybdenum iron protein domain"/>
    <property type="match status" value="2"/>
</dbReference>
<dbReference type="HAMAP" id="MF_01024">
    <property type="entry name" value="HisD"/>
    <property type="match status" value="1"/>
</dbReference>
<dbReference type="InterPro" id="IPR016161">
    <property type="entry name" value="Ald_DH/histidinol_DH"/>
</dbReference>
<dbReference type="InterPro" id="IPR001692">
    <property type="entry name" value="Histidinol_DH_CS"/>
</dbReference>
<dbReference type="InterPro" id="IPR022695">
    <property type="entry name" value="Histidinol_DH_monofunct"/>
</dbReference>
<dbReference type="InterPro" id="IPR012131">
    <property type="entry name" value="Hstdl_DH"/>
</dbReference>
<dbReference type="NCBIfam" id="TIGR00069">
    <property type="entry name" value="hisD"/>
    <property type="match status" value="1"/>
</dbReference>
<dbReference type="PANTHER" id="PTHR21256:SF2">
    <property type="entry name" value="HISTIDINE BIOSYNTHESIS TRIFUNCTIONAL PROTEIN"/>
    <property type="match status" value="1"/>
</dbReference>
<dbReference type="PANTHER" id="PTHR21256">
    <property type="entry name" value="HISTIDINOL DEHYDROGENASE HDH"/>
    <property type="match status" value="1"/>
</dbReference>
<dbReference type="Pfam" id="PF00815">
    <property type="entry name" value="Histidinol_dh"/>
    <property type="match status" value="1"/>
</dbReference>
<dbReference type="PIRSF" id="PIRSF000099">
    <property type="entry name" value="Histidinol_dh"/>
    <property type="match status" value="1"/>
</dbReference>
<dbReference type="PRINTS" id="PR00083">
    <property type="entry name" value="HOLDHDRGNASE"/>
</dbReference>
<dbReference type="SUPFAM" id="SSF53720">
    <property type="entry name" value="ALDH-like"/>
    <property type="match status" value="1"/>
</dbReference>
<dbReference type="PROSITE" id="PS00611">
    <property type="entry name" value="HISOL_DEHYDROGENASE"/>
    <property type="match status" value="1"/>
</dbReference>
<name>HISX_GEOKA</name>
<gene>
    <name evidence="1" type="primary">hisD</name>
    <name type="ordered locus">GK3075</name>
</gene>
<comment type="function">
    <text evidence="1">Catalyzes the sequential NAD-dependent oxidations of L-histidinol to L-histidinaldehyde and then to L-histidine.</text>
</comment>
<comment type="catalytic activity">
    <reaction evidence="1">
        <text>L-histidinol + 2 NAD(+) + H2O = L-histidine + 2 NADH + 3 H(+)</text>
        <dbReference type="Rhea" id="RHEA:20641"/>
        <dbReference type="ChEBI" id="CHEBI:15377"/>
        <dbReference type="ChEBI" id="CHEBI:15378"/>
        <dbReference type="ChEBI" id="CHEBI:57540"/>
        <dbReference type="ChEBI" id="CHEBI:57595"/>
        <dbReference type="ChEBI" id="CHEBI:57699"/>
        <dbReference type="ChEBI" id="CHEBI:57945"/>
        <dbReference type="EC" id="1.1.1.23"/>
    </reaction>
</comment>
<comment type="cofactor">
    <cofactor evidence="1">
        <name>Zn(2+)</name>
        <dbReference type="ChEBI" id="CHEBI:29105"/>
    </cofactor>
    <text evidence="1">Binds 1 zinc ion per subunit.</text>
</comment>
<comment type="pathway">
    <text evidence="1">Amino-acid biosynthesis; L-histidine biosynthesis; L-histidine from 5-phospho-alpha-D-ribose 1-diphosphate: step 9/9.</text>
</comment>
<comment type="similarity">
    <text evidence="1">Belongs to the histidinol dehydrogenase family.</text>
</comment>
<proteinExistence type="inferred from homology"/>
<reference key="1">
    <citation type="journal article" date="2004" name="Nucleic Acids Res.">
        <title>Thermoadaptation trait revealed by the genome sequence of thermophilic Geobacillus kaustophilus.</title>
        <authorList>
            <person name="Takami H."/>
            <person name="Takaki Y."/>
            <person name="Chee G.-J."/>
            <person name="Nishi S."/>
            <person name="Shimamura S."/>
            <person name="Suzuki H."/>
            <person name="Matsui S."/>
            <person name="Uchiyama I."/>
        </authorList>
    </citation>
    <scope>NUCLEOTIDE SEQUENCE [LARGE SCALE GENOMIC DNA]</scope>
    <source>
        <strain>HTA426</strain>
    </source>
</reference>
<organism>
    <name type="scientific">Geobacillus kaustophilus (strain HTA426)</name>
    <dbReference type="NCBI Taxonomy" id="235909"/>
    <lineage>
        <taxon>Bacteria</taxon>
        <taxon>Bacillati</taxon>
        <taxon>Bacillota</taxon>
        <taxon>Bacilli</taxon>
        <taxon>Bacillales</taxon>
        <taxon>Anoxybacillaceae</taxon>
        <taxon>Geobacillus</taxon>
        <taxon>Geobacillus thermoleovorans group</taxon>
    </lineage>
</organism>
<sequence length="424" mass="46055">MKIERIRGGVSLRRTIESGTEEQRRAVLDIIANVRDRGDAALKEYTERFDGVKLDSLKVTEEEMKRAHAAMDAEMLEIIRQAAANIRDYHKRQKRESWWMTKEDGTILGQKVTPLDAVGLYVPGGTAAYPSSVLMNVIPAQVAGVKRIVITSPPNKDGTLPAGVLAAAYELGVTEIYKVGGAQAIAALAYGTETIRPVDKIFGPGNIYVALAKREVFGHVAIDMIAGPSEIVVLADETARPDEIAADLLSQAEHDVRASAILVTPSMKLALAVASEVERQLETLPRRDIAQAALENYGAIYVTETLEEAVDVVNELAPEHLEVMTAEPLALFGRLRHAGAMFFGRFSSEPVGDYFAGPNHVLPTNGTARFSSGLSVDEFVKKSSVIVYSETALKQHGDKIAAFARLEGLEAHARAIEVRLEKGE</sequence>
<protein>
    <recommendedName>
        <fullName evidence="1">Histidinol dehydrogenase</fullName>
        <shortName evidence="1">HDH</shortName>
        <ecNumber evidence="1">1.1.1.23</ecNumber>
    </recommendedName>
</protein>
<feature type="chain" id="PRO_0000135773" description="Histidinol dehydrogenase">
    <location>
        <begin position="1"/>
        <end position="424"/>
    </location>
</feature>
<feature type="active site" description="Proton acceptor" evidence="1">
    <location>
        <position position="319"/>
    </location>
</feature>
<feature type="active site" description="Proton acceptor" evidence="1">
    <location>
        <position position="320"/>
    </location>
</feature>
<feature type="binding site" evidence="1">
    <location>
        <position position="121"/>
    </location>
    <ligand>
        <name>NAD(+)</name>
        <dbReference type="ChEBI" id="CHEBI:57540"/>
    </ligand>
</feature>
<feature type="binding site" evidence="1">
    <location>
        <position position="183"/>
    </location>
    <ligand>
        <name>NAD(+)</name>
        <dbReference type="ChEBI" id="CHEBI:57540"/>
    </ligand>
</feature>
<feature type="binding site" evidence="1">
    <location>
        <position position="206"/>
    </location>
    <ligand>
        <name>NAD(+)</name>
        <dbReference type="ChEBI" id="CHEBI:57540"/>
    </ligand>
</feature>
<feature type="binding site" evidence="1">
    <location>
        <position position="229"/>
    </location>
    <ligand>
        <name>substrate</name>
    </ligand>
</feature>
<feature type="binding site" evidence="1">
    <location>
        <position position="251"/>
    </location>
    <ligand>
        <name>substrate</name>
    </ligand>
</feature>
<feature type="binding site" evidence="1">
    <location>
        <position position="251"/>
    </location>
    <ligand>
        <name>Zn(2+)</name>
        <dbReference type="ChEBI" id="CHEBI:29105"/>
    </ligand>
</feature>
<feature type="binding site" evidence="1">
    <location>
        <position position="254"/>
    </location>
    <ligand>
        <name>substrate</name>
    </ligand>
</feature>
<feature type="binding site" evidence="1">
    <location>
        <position position="254"/>
    </location>
    <ligand>
        <name>Zn(2+)</name>
        <dbReference type="ChEBI" id="CHEBI:29105"/>
    </ligand>
</feature>
<feature type="binding site" evidence="1">
    <location>
        <position position="320"/>
    </location>
    <ligand>
        <name>substrate</name>
    </ligand>
</feature>
<feature type="binding site" evidence="1">
    <location>
        <position position="353"/>
    </location>
    <ligand>
        <name>substrate</name>
    </ligand>
</feature>
<feature type="binding site" evidence="1">
    <location>
        <position position="353"/>
    </location>
    <ligand>
        <name>Zn(2+)</name>
        <dbReference type="ChEBI" id="CHEBI:29105"/>
    </ligand>
</feature>
<feature type="binding site" evidence="1">
    <location>
        <position position="407"/>
    </location>
    <ligand>
        <name>substrate</name>
    </ligand>
</feature>
<feature type="binding site" evidence="1">
    <location>
        <position position="412"/>
    </location>
    <ligand>
        <name>substrate</name>
    </ligand>
</feature>
<feature type="binding site" evidence="1">
    <location>
        <position position="412"/>
    </location>
    <ligand>
        <name>Zn(2+)</name>
        <dbReference type="ChEBI" id="CHEBI:29105"/>
    </ligand>
</feature>
<accession>Q5KVC6</accession>
<evidence type="ECO:0000255" key="1">
    <source>
        <dbReference type="HAMAP-Rule" id="MF_01024"/>
    </source>
</evidence>
<keyword id="KW-0028">Amino-acid biosynthesis</keyword>
<keyword id="KW-0368">Histidine biosynthesis</keyword>
<keyword id="KW-0479">Metal-binding</keyword>
<keyword id="KW-0520">NAD</keyword>
<keyword id="KW-0560">Oxidoreductase</keyword>
<keyword id="KW-1185">Reference proteome</keyword>
<keyword id="KW-0862">Zinc</keyword>